<accession>A1AS07</accession>
<feature type="chain" id="PRO_1000094185" description="Transcription elongation factor GreA">
    <location>
        <begin position="1"/>
        <end position="158"/>
    </location>
</feature>
<organism>
    <name type="scientific">Pelobacter propionicus (strain DSM 2379 / NBRC 103807 / OttBd1)</name>
    <dbReference type="NCBI Taxonomy" id="338966"/>
    <lineage>
        <taxon>Bacteria</taxon>
        <taxon>Pseudomonadati</taxon>
        <taxon>Thermodesulfobacteriota</taxon>
        <taxon>Desulfuromonadia</taxon>
        <taxon>Desulfuromonadales</taxon>
        <taxon>Desulfuromonadaceae</taxon>
        <taxon>Pelobacter</taxon>
    </lineage>
</organism>
<gene>
    <name evidence="1" type="primary">greA</name>
    <name type="ordered locus">Ppro_2523</name>
</gene>
<comment type="function">
    <text evidence="1">Necessary for efficient RNA polymerase transcription elongation past template-encoded arresting sites. The arresting sites in DNA have the property of trapping a certain fraction of elongating RNA polymerases that pass through, resulting in locked ternary complexes. Cleavage of the nascent transcript by cleavage factors such as GreA or GreB allows the resumption of elongation from the new 3'terminus. GreA releases sequences of 2 to 3 nucleotides.</text>
</comment>
<comment type="similarity">
    <text evidence="1">Belongs to the GreA/GreB family.</text>
</comment>
<evidence type="ECO:0000255" key="1">
    <source>
        <dbReference type="HAMAP-Rule" id="MF_00105"/>
    </source>
</evidence>
<sequence length="158" mass="17687">MSHSIPLTKESYESLQEELKRLIRVERPKVIQDIAEARSHGDLSENAEYDAAKNRQGFIEGRIQELNSKLARAYVVDLSNMKPDKVVFGSTVTLYDTASEEEITYKIVGEDEADIKLGKISCTSPVGKALIGHKLDDSVKVKVPAGTKEYEIIDIKYE</sequence>
<proteinExistence type="inferred from homology"/>
<keyword id="KW-0238">DNA-binding</keyword>
<keyword id="KW-1185">Reference proteome</keyword>
<keyword id="KW-0804">Transcription</keyword>
<keyword id="KW-0805">Transcription regulation</keyword>
<dbReference type="EMBL" id="CP000482">
    <property type="protein sequence ID" value="ABL00128.1"/>
    <property type="molecule type" value="Genomic_DNA"/>
</dbReference>
<dbReference type="RefSeq" id="WP_011736382.1">
    <property type="nucleotide sequence ID" value="NC_008609.1"/>
</dbReference>
<dbReference type="SMR" id="A1AS07"/>
<dbReference type="STRING" id="338966.Ppro_2523"/>
<dbReference type="KEGG" id="ppd:Ppro_2523"/>
<dbReference type="eggNOG" id="COG0782">
    <property type="taxonomic scope" value="Bacteria"/>
</dbReference>
<dbReference type="HOGENOM" id="CLU_101379_2_0_7"/>
<dbReference type="OrthoDB" id="9808774at2"/>
<dbReference type="Proteomes" id="UP000006732">
    <property type="component" value="Chromosome"/>
</dbReference>
<dbReference type="GO" id="GO:0003677">
    <property type="term" value="F:DNA binding"/>
    <property type="evidence" value="ECO:0007669"/>
    <property type="project" value="UniProtKB-UniRule"/>
</dbReference>
<dbReference type="GO" id="GO:0070063">
    <property type="term" value="F:RNA polymerase binding"/>
    <property type="evidence" value="ECO:0007669"/>
    <property type="project" value="InterPro"/>
</dbReference>
<dbReference type="GO" id="GO:0006354">
    <property type="term" value="P:DNA-templated transcription elongation"/>
    <property type="evidence" value="ECO:0007669"/>
    <property type="project" value="TreeGrafter"/>
</dbReference>
<dbReference type="GO" id="GO:0032784">
    <property type="term" value="P:regulation of DNA-templated transcription elongation"/>
    <property type="evidence" value="ECO:0007669"/>
    <property type="project" value="UniProtKB-UniRule"/>
</dbReference>
<dbReference type="FunFam" id="1.10.287.180:FF:000001">
    <property type="entry name" value="Transcription elongation factor GreA"/>
    <property type="match status" value="1"/>
</dbReference>
<dbReference type="FunFam" id="3.10.50.30:FF:000001">
    <property type="entry name" value="Transcription elongation factor GreA"/>
    <property type="match status" value="1"/>
</dbReference>
<dbReference type="Gene3D" id="3.10.50.30">
    <property type="entry name" value="Transcription elongation factor, GreA/GreB, C-terminal domain"/>
    <property type="match status" value="1"/>
</dbReference>
<dbReference type="Gene3D" id="1.10.287.180">
    <property type="entry name" value="Transcription elongation factor, GreA/GreB, N-terminal domain"/>
    <property type="match status" value="1"/>
</dbReference>
<dbReference type="HAMAP" id="MF_00105">
    <property type="entry name" value="GreA_GreB"/>
    <property type="match status" value="1"/>
</dbReference>
<dbReference type="InterPro" id="IPR036953">
    <property type="entry name" value="GreA/GreB_C_sf"/>
</dbReference>
<dbReference type="InterPro" id="IPR018151">
    <property type="entry name" value="TF_GreA/GreB_CS"/>
</dbReference>
<dbReference type="InterPro" id="IPR006359">
    <property type="entry name" value="Tscrpt_elong_fac_GreA"/>
</dbReference>
<dbReference type="InterPro" id="IPR028624">
    <property type="entry name" value="Tscrpt_elong_fac_GreA/B"/>
</dbReference>
<dbReference type="InterPro" id="IPR001437">
    <property type="entry name" value="Tscrpt_elong_fac_GreA/B_C"/>
</dbReference>
<dbReference type="InterPro" id="IPR023459">
    <property type="entry name" value="Tscrpt_elong_fac_GreA/B_fam"/>
</dbReference>
<dbReference type="InterPro" id="IPR022691">
    <property type="entry name" value="Tscrpt_elong_fac_GreA/B_N"/>
</dbReference>
<dbReference type="InterPro" id="IPR036805">
    <property type="entry name" value="Tscrpt_elong_fac_GreA/B_N_sf"/>
</dbReference>
<dbReference type="NCBIfam" id="TIGR01462">
    <property type="entry name" value="greA"/>
    <property type="match status" value="1"/>
</dbReference>
<dbReference type="NCBIfam" id="NF001261">
    <property type="entry name" value="PRK00226.1-2"/>
    <property type="match status" value="1"/>
</dbReference>
<dbReference type="NCBIfam" id="NF001263">
    <property type="entry name" value="PRK00226.1-4"/>
    <property type="match status" value="1"/>
</dbReference>
<dbReference type="NCBIfam" id="NF001264">
    <property type="entry name" value="PRK00226.1-5"/>
    <property type="match status" value="1"/>
</dbReference>
<dbReference type="PANTHER" id="PTHR30437">
    <property type="entry name" value="TRANSCRIPTION ELONGATION FACTOR GREA"/>
    <property type="match status" value="1"/>
</dbReference>
<dbReference type="PANTHER" id="PTHR30437:SF4">
    <property type="entry name" value="TRANSCRIPTION ELONGATION FACTOR GREA"/>
    <property type="match status" value="1"/>
</dbReference>
<dbReference type="Pfam" id="PF01272">
    <property type="entry name" value="GreA_GreB"/>
    <property type="match status" value="1"/>
</dbReference>
<dbReference type="Pfam" id="PF03449">
    <property type="entry name" value="GreA_GreB_N"/>
    <property type="match status" value="1"/>
</dbReference>
<dbReference type="PIRSF" id="PIRSF006092">
    <property type="entry name" value="GreA_GreB"/>
    <property type="match status" value="1"/>
</dbReference>
<dbReference type="SUPFAM" id="SSF54534">
    <property type="entry name" value="FKBP-like"/>
    <property type="match status" value="1"/>
</dbReference>
<dbReference type="SUPFAM" id="SSF46557">
    <property type="entry name" value="GreA transcript cleavage protein, N-terminal domain"/>
    <property type="match status" value="1"/>
</dbReference>
<dbReference type="PROSITE" id="PS00829">
    <property type="entry name" value="GREAB_1"/>
    <property type="match status" value="1"/>
</dbReference>
<dbReference type="PROSITE" id="PS00830">
    <property type="entry name" value="GREAB_2"/>
    <property type="match status" value="1"/>
</dbReference>
<reference key="1">
    <citation type="submission" date="2006-10" db="EMBL/GenBank/DDBJ databases">
        <title>Complete sequence of chromosome of Pelobacter propionicus DSM 2379.</title>
        <authorList>
            <consortium name="US DOE Joint Genome Institute"/>
            <person name="Copeland A."/>
            <person name="Lucas S."/>
            <person name="Lapidus A."/>
            <person name="Barry K."/>
            <person name="Detter J.C."/>
            <person name="Glavina del Rio T."/>
            <person name="Hammon N."/>
            <person name="Israni S."/>
            <person name="Dalin E."/>
            <person name="Tice H."/>
            <person name="Pitluck S."/>
            <person name="Saunders E."/>
            <person name="Brettin T."/>
            <person name="Bruce D."/>
            <person name="Han C."/>
            <person name="Tapia R."/>
            <person name="Schmutz J."/>
            <person name="Larimer F."/>
            <person name="Land M."/>
            <person name="Hauser L."/>
            <person name="Kyrpides N."/>
            <person name="Kim E."/>
            <person name="Lovley D."/>
            <person name="Richardson P."/>
        </authorList>
    </citation>
    <scope>NUCLEOTIDE SEQUENCE [LARGE SCALE GENOMIC DNA]</scope>
    <source>
        <strain>DSM 2379 / NBRC 103807 / OttBd1</strain>
    </source>
</reference>
<name>GREA_PELPD</name>
<protein>
    <recommendedName>
        <fullName evidence="1">Transcription elongation factor GreA</fullName>
    </recommendedName>
    <alternativeName>
        <fullName evidence="1">Transcript cleavage factor GreA</fullName>
    </alternativeName>
</protein>